<evidence type="ECO:0000250" key="1">
    <source>
        <dbReference type="UniProtKB" id="B8NQ51"/>
    </source>
</evidence>
<evidence type="ECO:0000250" key="2">
    <source>
        <dbReference type="UniProtKB" id="Q8I914"/>
    </source>
</evidence>
<evidence type="ECO:0000255" key="3"/>
<evidence type="ECO:0000303" key="4">
    <source>
    </source>
</evidence>
<evidence type="ECO:0000305" key="5"/>
<evidence type="ECO:0000312" key="6">
    <source>
        <dbReference type="EMBL" id="EEH20034.1"/>
    </source>
</evidence>
<accession>C0S3M9</accession>
<sequence>MQPLTRTICALFCLLLTLPLTFGSPFELEPRRNKLKIGTRIKQRRPTYAIAHMVLDKTGVKDAIKHGANALEIDVAAYRGGWWADHDMKAKSKGWSLESLFQVIAKENKHIAFVWLDLKTPDMCTGKKCNKKVLQPSKCKENEKCSMKSLQQLTRKYLKPAGVRVLFGFYKKHHARSAAFDYIQKSLGDGEAVCLSGEANKVMEIFKKEGSKIKPQRRVMDYGRTELPNGFGDCNEKGGKTCAELKNGAKLRQKGDLQRVFAWTSHVGEGKYVNKLLDKASVDGIIYGFAKTRYYHHKDTEKSSKDIIDRVKKSKSRYMVTGADKLW</sequence>
<reference key="1">
    <citation type="journal article" date="2011" name="PLoS Genet.">
        <title>Comparative genomic analysis of human fungal pathogens causing paracoccidioidomycosis.</title>
        <authorList>
            <person name="Desjardins C.A."/>
            <person name="Champion M.D."/>
            <person name="Holder J.W."/>
            <person name="Muszewska A."/>
            <person name="Goldberg J."/>
            <person name="Bailao A.M."/>
            <person name="Brigido M.M."/>
            <person name="Ferreira M.E."/>
            <person name="Garcia A.M."/>
            <person name="Grynberg M."/>
            <person name="Gujja S."/>
            <person name="Heiman D.I."/>
            <person name="Henn M.R."/>
            <person name="Kodira C.D."/>
            <person name="Leon-Narvaez H."/>
            <person name="Longo L.V.G."/>
            <person name="Ma L.-J."/>
            <person name="Malavazi I."/>
            <person name="Matsuo A.L."/>
            <person name="Morais F.V."/>
            <person name="Pereira M."/>
            <person name="Rodriguez-Brito S."/>
            <person name="Sakthikumar S."/>
            <person name="Salem-Izacc S.M."/>
            <person name="Sykes S.M."/>
            <person name="Teixeira M.M."/>
            <person name="Vallejo M.C."/>
            <person name="Walter M.E."/>
            <person name="Yandava C."/>
            <person name="Young S."/>
            <person name="Zeng Q."/>
            <person name="Zucker J."/>
            <person name="Felipe M.S."/>
            <person name="Goldman G.H."/>
            <person name="Haas B.J."/>
            <person name="McEwen J.G."/>
            <person name="Nino-Vega G."/>
            <person name="Puccia R."/>
            <person name="San-Blas G."/>
            <person name="Soares C.M."/>
            <person name="Birren B.W."/>
            <person name="Cuomo C.A."/>
        </authorList>
    </citation>
    <scope>NUCLEOTIDE SEQUENCE [LARGE SCALE GENOMIC DNA]</scope>
    <source>
        <strain>Pb03</strain>
    </source>
</reference>
<reference key="2">
    <citation type="journal article" date="2013" name="PLoS ONE">
        <title>Identification of new sphingomyelinases D in pathogenic fungi and other pathogenic organisms.</title>
        <authorList>
            <person name="Dias-Lopes C."/>
            <person name="Neshich I.A."/>
            <person name="Neshich G."/>
            <person name="Ortega J.M."/>
            <person name="Granier C."/>
            <person name="Chavez-Olortegui C."/>
            <person name="Molina F."/>
            <person name="Felicori L."/>
        </authorList>
    </citation>
    <scope>IDENTIFICATION</scope>
</reference>
<proteinExistence type="inferred from homology"/>
<gene>
    <name evidence="6" type="ORF">PABG_02293</name>
</gene>
<keyword id="KW-0378">Hydrolase</keyword>
<keyword id="KW-0442">Lipid degradation</keyword>
<keyword id="KW-0443">Lipid metabolism</keyword>
<keyword id="KW-0460">Magnesium</keyword>
<keyword id="KW-0479">Metal-binding</keyword>
<keyword id="KW-0964">Secreted</keyword>
<keyword id="KW-0732">Signal</keyword>
<keyword id="KW-0843">Virulence</keyword>
<protein>
    <recommendedName>
        <fullName evidence="4">Sphingomyelinase D</fullName>
        <shortName evidence="4">SMase D</shortName>
        <ecNumber evidence="1">3.1.4.41</ecNumber>
    </recommendedName>
</protein>
<feature type="signal peptide" evidence="3">
    <location>
        <begin position="1"/>
        <end position="23"/>
    </location>
</feature>
<feature type="chain" id="PRO_0000431991" description="Sphingomyelinase D" evidence="3">
    <location>
        <begin position="24"/>
        <end position="327"/>
    </location>
</feature>
<feature type="short sequence motif" description="SMD-tail" evidence="3">
    <location>
        <begin position="320"/>
        <end position="327"/>
    </location>
</feature>
<feature type="active site" evidence="2">
    <location>
        <position position="52"/>
    </location>
</feature>
<feature type="binding site" evidence="2">
    <location>
        <position position="72"/>
    </location>
    <ligand>
        <name>Mg(2+)</name>
        <dbReference type="ChEBI" id="CHEBI:18420"/>
    </ligand>
</feature>
<feature type="binding site" evidence="2">
    <location>
        <position position="74"/>
    </location>
    <ligand>
        <name>Mg(2+)</name>
        <dbReference type="ChEBI" id="CHEBI:18420"/>
    </ligand>
</feature>
<feature type="binding site" evidence="2">
    <location>
        <position position="117"/>
    </location>
    <ligand>
        <name>Mg(2+)</name>
        <dbReference type="ChEBI" id="CHEBI:18420"/>
    </ligand>
</feature>
<comment type="function">
    <text evidence="1">Catalyzes the hydrolysis of sphingomyelin. Sphingomyelinases D are produced by some spider in their venoms, but also by arthropods such as ticks, or pathogenic bacteria and fungi. They might play a role in pathogenicity through different mechanisms, such as membrane destabilization and host cell penetration, but also pulmonary inflammation and cutaneous lesions.</text>
</comment>
<comment type="catalytic activity">
    <reaction evidence="1">
        <text>a sphingomyelin + H2O = an N-acylsphing-4-enine 1-phosphate + choline + H(+)</text>
        <dbReference type="Rhea" id="RHEA:20984"/>
        <dbReference type="ChEBI" id="CHEBI:15354"/>
        <dbReference type="ChEBI" id="CHEBI:15377"/>
        <dbReference type="ChEBI" id="CHEBI:15378"/>
        <dbReference type="ChEBI" id="CHEBI:17636"/>
        <dbReference type="ChEBI" id="CHEBI:57674"/>
        <dbReference type="EC" id="3.1.4.41"/>
    </reaction>
</comment>
<comment type="cofactor">
    <cofactor evidence="2">
        <name>Mg(2+)</name>
        <dbReference type="ChEBI" id="CHEBI:18420"/>
    </cofactor>
    <text evidence="2">Binds 1 Mg(2+) ion per subunit.</text>
</comment>
<comment type="subcellular location">
    <subcellularLocation>
        <location evidence="5">Secreted</location>
    </subcellularLocation>
</comment>
<comment type="domain">
    <text evidence="4">The SMD-tail motif is highly conserved and may be responsible for structural stabilization.</text>
</comment>
<comment type="similarity">
    <text evidence="5">Belongs to the sphingomyelinase D/phospholipase D family.</text>
</comment>
<name>SMD_PARBP</name>
<organism>
    <name type="scientific">Paracoccidioides brasiliensis (strain Pb03)</name>
    <dbReference type="NCBI Taxonomy" id="482561"/>
    <lineage>
        <taxon>Eukaryota</taxon>
        <taxon>Fungi</taxon>
        <taxon>Dikarya</taxon>
        <taxon>Ascomycota</taxon>
        <taxon>Pezizomycotina</taxon>
        <taxon>Eurotiomycetes</taxon>
        <taxon>Eurotiomycetidae</taxon>
        <taxon>Onygenales</taxon>
        <taxon>Ajellomycetaceae</taxon>
        <taxon>Paracoccidioides</taxon>
    </lineage>
</organism>
<dbReference type="EC" id="3.1.4.41" evidence="1"/>
<dbReference type="EMBL" id="KN305533">
    <property type="protein sequence ID" value="EEH20034.1"/>
    <property type="molecule type" value="Genomic_DNA"/>
</dbReference>
<dbReference type="VEuPathDB" id="FungiDB:PABG_02293"/>
<dbReference type="HOGENOM" id="CLU_059400_0_0_1"/>
<dbReference type="OrthoDB" id="5054at33183"/>
<dbReference type="GO" id="GO:0005576">
    <property type="term" value="C:extracellular region"/>
    <property type="evidence" value="ECO:0007669"/>
    <property type="project" value="UniProtKB-SubCell"/>
</dbReference>
<dbReference type="GO" id="GO:0046872">
    <property type="term" value="F:metal ion binding"/>
    <property type="evidence" value="ECO:0007669"/>
    <property type="project" value="UniProtKB-KW"/>
</dbReference>
<dbReference type="GO" id="GO:0050290">
    <property type="term" value="F:sphingomyelin phosphodiesterase D activity"/>
    <property type="evidence" value="ECO:0007669"/>
    <property type="project" value="UniProtKB-EC"/>
</dbReference>
<dbReference type="GO" id="GO:0016042">
    <property type="term" value="P:lipid catabolic process"/>
    <property type="evidence" value="ECO:0007669"/>
    <property type="project" value="UniProtKB-KW"/>
</dbReference>
<dbReference type="CDD" id="cd08576">
    <property type="entry name" value="GDPD_like_SMaseD_PLD"/>
    <property type="match status" value="1"/>
</dbReference>
<dbReference type="Gene3D" id="3.20.20.190">
    <property type="entry name" value="Phosphatidylinositol (PI) phosphodiesterase"/>
    <property type="match status" value="1"/>
</dbReference>
<dbReference type="InterPro" id="IPR017946">
    <property type="entry name" value="PLC-like_Pdiesterase_TIM-brl"/>
</dbReference>
<dbReference type="SUPFAM" id="SSF51695">
    <property type="entry name" value="PLC-like phosphodiesterases"/>
    <property type="match status" value="1"/>
</dbReference>